<reference key="1">
    <citation type="journal article" date="1999" name="Yeast">
        <title>Identification of a putative response regulator two-component phosphorelay gene (CaSSK1) from Candida albicans.</title>
        <authorList>
            <person name="Calera J.A."/>
            <person name="Calderone R.A."/>
        </authorList>
    </citation>
    <scope>NUCLEOTIDE SEQUENCE [GENOMIC DNA]</scope>
    <source>
        <strain>SC5314 / ATCC MYA-2876</strain>
    </source>
</reference>
<reference key="2">
    <citation type="journal article" date="2004" name="Proc. Natl. Acad. Sci. U.S.A.">
        <title>The diploid genome sequence of Candida albicans.</title>
        <authorList>
            <person name="Jones T."/>
            <person name="Federspiel N.A."/>
            <person name="Chibana H."/>
            <person name="Dungan J."/>
            <person name="Kalman S."/>
            <person name="Magee B.B."/>
            <person name="Newport G."/>
            <person name="Thorstenson Y.R."/>
            <person name="Agabian N."/>
            <person name="Magee P.T."/>
            <person name="Davis R.W."/>
            <person name="Scherer S."/>
        </authorList>
    </citation>
    <scope>NUCLEOTIDE SEQUENCE [LARGE SCALE GENOMIC DNA]</scope>
    <source>
        <strain>SC5314 / ATCC MYA-2876</strain>
    </source>
</reference>
<reference key="3">
    <citation type="journal article" date="2007" name="Genome Biol.">
        <title>Assembly of the Candida albicans genome into sixteen supercontigs aligned on the eight chromosomes.</title>
        <authorList>
            <person name="van het Hoog M."/>
            <person name="Rast T.J."/>
            <person name="Martchenko M."/>
            <person name="Grindle S."/>
            <person name="Dignard D."/>
            <person name="Hogues H."/>
            <person name="Cuomo C."/>
            <person name="Berriman M."/>
            <person name="Scherer S."/>
            <person name="Magee B.B."/>
            <person name="Whiteway M."/>
            <person name="Chibana H."/>
            <person name="Nantel A."/>
            <person name="Magee P.T."/>
        </authorList>
    </citation>
    <scope>GENOME REANNOTATION</scope>
    <source>
        <strain>SC5314 / ATCC MYA-2876</strain>
    </source>
</reference>
<reference key="4">
    <citation type="journal article" date="2013" name="Genome Biol.">
        <title>Assembly of a phased diploid Candida albicans genome facilitates allele-specific measurements and provides a simple model for repeat and indel structure.</title>
        <authorList>
            <person name="Muzzey D."/>
            <person name="Schwartz K."/>
            <person name="Weissman J.S."/>
            <person name="Sherlock G."/>
        </authorList>
    </citation>
    <scope>NUCLEOTIDE SEQUENCE [LARGE SCALE GENOMIC DNA]</scope>
    <scope>GENOME REANNOTATION</scope>
    <source>
        <strain>SC5314 / ATCC MYA-2876</strain>
    </source>
</reference>
<reference key="5">
    <citation type="journal article" date="1999" name="Mycoses">
        <title>Histidine kinase, two-component signal transduction proteins of Candida albicans and the pathogenesis of candidosis.</title>
        <authorList>
            <person name="Calera J.A."/>
            <person name="Calderone R."/>
        </authorList>
    </citation>
    <scope>FUNCTION</scope>
    <scope>DISRUPTION PHENOTYPE</scope>
</reference>
<reference key="6">
    <citation type="journal article" date="2000" name="Infect. Immun.">
        <title>Defective hyphal development and avirulence caused by a deletion of the SSK1 response regulator gene in Candida albicans.</title>
        <authorList>
            <person name="Calera J.A."/>
            <person name="Zhao X.J."/>
            <person name="Calderone R."/>
        </authorList>
    </citation>
    <scope>FUNCTION</scope>
    <scope>DISRUPTION PHENOTYPE</scope>
    <source>
        <strain>SC5314 / ATCC MYA-2876</strain>
    </source>
</reference>
<reference key="7">
    <citation type="journal article" date="2001" name="J. Infect. Dis.">
        <title>Adherence and invasion studies of Candida albicans strains, using in vitro models of esophageal candidiasis.</title>
        <authorList>
            <person name="Bernhardt J."/>
            <person name="Herman D."/>
            <person name="Sheridan M."/>
            <person name="Calderone R."/>
        </authorList>
    </citation>
    <scope>FUNCTION</scope>
    <scope>DISRUPTION PHENOTYPE</scope>
</reference>
<reference key="8">
    <citation type="journal article" date="2002" name="Infect. Immun.">
        <title>Temporal expression of the Candida albicans genes CHK1 and CSSK1, adherence, and morphogenesis in a model of reconstituted human esophageal epithelial candidiasis.</title>
        <authorList>
            <person name="Li D."/>
            <person name="Bernhardt J."/>
            <person name="Calderone R."/>
        </authorList>
    </citation>
    <scope>DISRUPTION PHENOTYPE</scope>
    <scope>INDUCTION</scope>
</reference>
<reference key="9">
    <citation type="journal article" date="2004" name="Microbiology">
        <title>Studies on the regulation of the two-component histidine kinase gene CHK1 in Candida albicans using the heterologous lacZ reporter gene.</title>
        <authorList>
            <person name="Li D."/>
            <person name="Gurkovska V."/>
            <person name="Sheridan M."/>
            <person name="Calderone R."/>
            <person name="Chauhan N."/>
        </authorList>
    </citation>
    <scope>DISRUPTION PHENOTYPE</scope>
    <scope>FUNCTION</scope>
</reference>
<reference key="10">
    <citation type="journal article" date="2005" name="Infect. Immun.">
        <title>Deletion of the SSK1 response regulator gene in Candida albicans contributes to enhanced killing by human polymorphonuclear neutrophils.</title>
        <authorList>
            <person name="Du C."/>
            <person name="Calderone R."/>
            <person name="Richert J."/>
            <person name="Li D."/>
        </authorList>
    </citation>
    <scope>DISRUPTION PHENOTYPE</scope>
    <scope>FUNCTION</scope>
</reference>
<reference key="11">
    <citation type="journal article" date="2006" name="Mol. Microbiol.">
        <title>Functional studies of the Ssk1p response regulator protein of Candida albicans as determined by phenotypic analysis of receiver domain point mutants.</title>
        <authorList>
            <person name="Menon V."/>
            <person name="Li D."/>
            <person name="Chauhan N."/>
            <person name="Rajnarayanan R."/>
            <person name="Dubrovska A."/>
            <person name="West A.H."/>
            <person name="Calderone R."/>
        </authorList>
    </citation>
    <scope>FUNCTION</scope>
    <scope>MUTAGENESIS OF ASP-513 AND ASP-556</scope>
    <scope>PHOSPHORYLATION AT ASP-556</scope>
</reference>
<reference key="12">
    <citation type="journal article" date="2007" name="Antimicrob. Agents Chemother.">
        <title>The Ssk1p response regulator and Chk1p histidine kinase mutants of Candida albicans are hypersensitive to fluconazole and voriconazole.</title>
        <authorList>
            <person name="Chauhan N."/>
            <person name="Kruppa M."/>
            <person name="Calderone R."/>
        </authorList>
    </citation>
    <scope>DISRUPTION PHENOTYPE</scope>
    <scope>FUNCTION</scope>
</reference>
<reference key="13">
    <citation type="journal article" date="2008" name="FEMS Yeast Res.">
        <title>Transcriptional profiling of the Candida albicans Ssk1p receiver domain point mutants and their virulence.</title>
        <authorList>
            <person name="Menon V."/>
            <person name="De Bernardis F."/>
            <person name="Calderone R."/>
            <person name="Chauhan N."/>
        </authorList>
    </citation>
    <scope>FUNCTION</scope>
    <scope>MUTAGENESIS OF ASP-513 AND ASP-556</scope>
</reference>
<gene>
    <name type="primary">SSK1</name>
    <name type="ordered locus">CAALFM_C113930WA</name>
    <name type="ORF">CaO19.12498</name>
    <name type="ORF">CaO19.5031</name>
</gene>
<name>SSK1_CANAL</name>
<protein>
    <recommendedName>
        <fullName>Oxidative stress response two-component system protein SSK1</fullName>
    </recommendedName>
</protein>
<comment type="function">
    <text evidence="3 4 5 7 8 9 10 11">Final receptor of the SLN1-YPD1-SSK1 two-component regulatory system, which controls activity of the HOG1 pathway in response to oxidative stress and probably also to the osmolarity of the extracellular environment. Involved in cell wall biosynthesis, hyphal growth, and virulence. Regulates the expression of CHK1, as well as of a subset of genes whose functions are associated with cell wall biosynthesis and adaptation to oxidative stress. Provides at least partial adaptive functions for the survival following encounter with human neutrophils.</text>
</comment>
<comment type="induction">
    <text evidence="6">Expression is detected as early as 1 hour after infection of reconstituted human esophageal tissue and increases thereafter up to 48 hours postinfection.</text>
</comment>
<comment type="disruption phenotype">
    <text evidence="3 4 5 6 7 8 10">Leads to flocculation, attenuated virulence towards reconstituted human esophageal tissue, and to hypersensitivity to fluconazole and voriconazole.</text>
</comment>
<comment type="similarity">
    <text evidence="12">Belongs to the SSK1 family.</text>
</comment>
<keyword id="KW-0597">Phosphoprotein</keyword>
<keyword id="KW-1185">Reference proteome</keyword>
<keyword id="KW-0346">Stress response</keyword>
<keyword id="KW-0902">Two-component regulatory system</keyword>
<keyword id="KW-0843">Virulence</keyword>
<evidence type="ECO:0000255" key="1">
    <source>
        <dbReference type="PROSITE-ProRule" id="PRU00169"/>
    </source>
</evidence>
<evidence type="ECO:0000256" key="2">
    <source>
        <dbReference type="SAM" id="MobiDB-lite"/>
    </source>
</evidence>
<evidence type="ECO:0000269" key="3">
    <source>
    </source>
</evidence>
<evidence type="ECO:0000269" key="4">
    <source>
    </source>
</evidence>
<evidence type="ECO:0000269" key="5">
    <source>
    </source>
</evidence>
<evidence type="ECO:0000269" key="6">
    <source>
    </source>
</evidence>
<evidence type="ECO:0000269" key="7">
    <source>
    </source>
</evidence>
<evidence type="ECO:0000269" key="8">
    <source>
    </source>
</evidence>
<evidence type="ECO:0000269" key="9">
    <source>
    </source>
</evidence>
<evidence type="ECO:0000269" key="10">
    <source>
    </source>
</evidence>
<evidence type="ECO:0000269" key="11">
    <source>
    </source>
</evidence>
<evidence type="ECO:0000305" key="12"/>
<dbReference type="EMBL" id="AF084608">
    <property type="protein sequence ID" value="AAD55813.1"/>
    <property type="molecule type" value="Genomic_DNA"/>
</dbReference>
<dbReference type="EMBL" id="CP017623">
    <property type="protein sequence ID" value="AOW26994.1"/>
    <property type="molecule type" value="Genomic_DNA"/>
</dbReference>
<dbReference type="RefSeq" id="XP_722233.1">
    <property type="nucleotide sequence ID" value="XM_717140.1"/>
</dbReference>
<dbReference type="SMR" id="Q5AKU6"/>
<dbReference type="STRING" id="237561.Q5AKU6"/>
<dbReference type="EnsemblFungi" id="C1_13930W_A-T">
    <property type="protein sequence ID" value="C1_13930W_A-T-p1"/>
    <property type="gene ID" value="C1_13930W_A"/>
</dbReference>
<dbReference type="GeneID" id="3636184"/>
<dbReference type="KEGG" id="cal:CAALFM_C113930WA"/>
<dbReference type="CGD" id="CAL0000190567">
    <property type="gene designation" value="SSK1"/>
</dbReference>
<dbReference type="VEuPathDB" id="FungiDB:C1_13930W_A"/>
<dbReference type="eggNOG" id="KOG0519">
    <property type="taxonomic scope" value="Eukaryota"/>
</dbReference>
<dbReference type="HOGENOM" id="CLU_008307_4_0_1"/>
<dbReference type="InParanoid" id="Q5AKU6"/>
<dbReference type="OMA" id="QALIDWN"/>
<dbReference type="OrthoDB" id="21225at2759"/>
<dbReference type="PHI-base" id="PHI:189"/>
<dbReference type="PHI-base" id="PHI:3020"/>
<dbReference type="PRO" id="PR:Q5AKU6"/>
<dbReference type="Proteomes" id="UP000000559">
    <property type="component" value="Chromosome 1"/>
</dbReference>
<dbReference type="GO" id="GO:0000156">
    <property type="term" value="F:phosphorelay response regulator activity"/>
    <property type="evidence" value="ECO:0000315"/>
    <property type="project" value="CGD"/>
</dbReference>
<dbReference type="GO" id="GO:0034605">
    <property type="term" value="P:cellular response to heat"/>
    <property type="evidence" value="ECO:0000315"/>
    <property type="project" value="CGD"/>
</dbReference>
<dbReference type="GO" id="GO:0036244">
    <property type="term" value="P:cellular response to neutral pH"/>
    <property type="evidence" value="ECO:0000315"/>
    <property type="project" value="CGD"/>
</dbReference>
<dbReference type="GO" id="GO:0034599">
    <property type="term" value="P:cellular response to oxidative stress"/>
    <property type="evidence" value="ECO:0000315"/>
    <property type="project" value="CGD"/>
</dbReference>
<dbReference type="GO" id="GO:0009267">
    <property type="term" value="P:cellular response to starvation"/>
    <property type="evidence" value="ECO:0000315"/>
    <property type="project" value="CGD"/>
</dbReference>
<dbReference type="GO" id="GO:0030447">
    <property type="term" value="P:filamentous growth"/>
    <property type="evidence" value="ECO:0000315"/>
    <property type="project" value="CGD"/>
</dbReference>
<dbReference type="GO" id="GO:0044182">
    <property type="term" value="P:filamentous growth of a population of unicellular organisms"/>
    <property type="evidence" value="ECO:0000315"/>
    <property type="project" value="CGD"/>
</dbReference>
<dbReference type="GO" id="GO:0036180">
    <property type="term" value="P:filamentous growth of a population of unicellular organisms in response to biotic stimulus"/>
    <property type="evidence" value="ECO:0000315"/>
    <property type="project" value="CGD"/>
</dbReference>
<dbReference type="GO" id="GO:0036178">
    <property type="term" value="P:filamentous growth of a population of unicellular organisms in response to neutral pH"/>
    <property type="evidence" value="ECO:0000315"/>
    <property type="project" value="CGD"/>
</dbReference>
<dbReference type="GO" id="GO:0036170">
    <property type="term" value="P:filamentous growth of a population of unicellular organisms in response to starvation"/>
    <property type="evidence" value="ECO:0000315"/>
    <property type="project" value="CGD"/>
</dbReference>
<dbReference type="GO" id="GO:0031505">
    <property type="term" value="P:fungal-type cell wall organization"/>
    <property type="evidence" value="ECO:0000315"/>
    <property type="project" value="CGD"/>
</dbReference>
<dbReference type="GO" id="GO:0000160">
    <property type="term" value="P:phosphorelay signal transduction system"/>
    <property type="evidence" value="ECO:0000315"/>
    <property type="project" value="CGD"/>
</dbReference>
<dbReference type="GO" id="GO:1900445">
    <property type="term" value="P:positive regulation of filamentous growth of a population of unicellular organisms in response to biotic stimulus"/>
    <property type="evidence" value="ECO:0000315"/>
    <property type="project" value="CGD"/>
</dbReference>
<dbReference type="GO" id="GO:1900442">
    <property type="term" value="P:positive regulation of filamentous growth of a population of unicellular organisms in response to neutral pH"/>
    <property type="evidence" value="ECO:0000315"/>
    <property type="project" value="CGD"/>
</dbReference>
<dbReference type="GO" id="GO:1900436">
    <property type="term" value="P:positive regulation of filamentous growth of a population of unicellular organisms in response to starvation"/>
    <property type="evidence" value="ECO:0000315"/>
    <property type="project" value="CGD"/>
</dbReference>
<dbReference type="GO" id="GO:1900407">
    <property type="term" value="P:regulation of cellular response to oxidative stress"/>
    <property type="evidence" value="ECO:0000316"/>
    <property type="project" value="CGD"/>
</dbReference>
<dbReference type="GO" id="GO:1900428">
    <property type="term" value="P:regulation of filamentous growth of a population of unicellular organisms"/>
    <property type="evidence" value="ECO:0000315"/>
    <property type="project" value="CGD"/>
</dbReference>
<dbReference type="GO" id="GO:0042783">
    <property type="term" value="P:symbiont-mediated evasion of host immune response"/>
    <property type="evidence" value="ECO:0000315"/>
    <property type="project" value="CGD"/>
</dbReference>
<dbReference type="CDD" id="cd17546">
    <property type="entry name" value="REC_hyHK_CKI1_RcsC-like"/>
    <property type="match status" value="1"/>
</dbReference>
<dbReference type="FunFam" id="3.40.50.2300:FF:000146">
    <property type="entry name" value="Putative two-component response regulator SSK1p"/>
    <property type="match status" value="1"/>
</dbReference>
<dbReference type="Gene3D" id="3.40.50.2300">
    <property type="match status" value="1"/>
</dbReference>
<dbReference type="InterPro" id="IPR011006">
    <property type="entry name" value="CheY-like_superfamily"/>
</dbReference>
<dbReference type="InterPro" id="IPR001789">
    <property type="entry name" value="Sig_transdc_resp-reg_receiver"/>
</dbReference>
<dbReference type="PANTHER" id="PTHR45339">
    <property type="entry name" value="HYBRID SIGNAL TRANSDUCTION HISTIDINE KINASE J"/>
    <property type="match status" value="1"/>
</dbReference>
<dbReference type="PANTHER" id="PTHR45339:SF1">
    <property type="entry name" value="HYBRID SIGNAL TRANSDUCTION HISTIDINE KINASE J"/>
    <property type="match status" value="1"/>
</dbReference>
<dbReference type="Pfam" id="PF00072">
    <property type="entry name" value="Response_reg"/>
    <property type="match status" value="1"/>
</dbReference>
<dbReference type="SMART" id="SM00448">
    <property type="entry name" value="REC"/>
    <property type="match status" value="1"/>
</dbReference>
<dbReference type="SUPFAM" id="SSF52172">
    <property type="entry name" value="CheY-like"/>
    <property type="match status" value="1"/>
</dbReference>
<dbReference type="PROSITE" id="PS50110">
    <property type="entry name" value="RESPONSE_REGULATORY"/>
    <property type="match status" value="1"/>
</dbReference>
<feature type="chain" id="PRO_0000425802" description="Oxidative stress response two-component system protein SSK1">
    <location>
        <begin position="1"/>
        <end position="674"/>
    </location>
</feature>
<feature type="domain" description="Response regulatory" evidence="1">
    <location>
        <begin position="507"/>
        <end position="653"/>
    </location>
</feature>
<feature type="region of interest" description="Disordered" evidence="2">
    <location>
        <begin position="66"/>
        <end position="115"/>
    </location>
</feature>
<feature type="region of interest" description="Disordered" evidence="2">
    <location>
        <begin position="259"/>
        <end position="354"/>
    </location>
</feature>
<feature type="region of interest" description="Disordered" evidence="2">
    <location>
        <begin position="372"/>
        <end position="497"/>
    </location>
</feature>
<feature type="compositionally biased region" description="Polar residues" evidence="2">
    <location>
        <begin position="66"/>
        <end position="75"/>
    </location>
</feature>
<feature type="compositionally biased region" description="Basic and acidic residues" evidence="2">
    <location>
        <begin position="90"/>
        <end position="99"/>
    </location>
</feature>
<feature type="compositionally biased region" description="Polar residues" evidence="2">
    <location>
        <begin position="101"/>
        <end position="115"/>
    </location>
</feature>
<feature type="compositionally biased region" description="Low complexity" evidence="2">
    <location>
        <begin position="264"/>
        <end position="276"/>
    </location>
</feature>
<feature type="compositionally biased region" description="Polar residues" evidence="2">
    <location>
        <begin position="302"/>
        <end position="314"/>
    </location>
</feature>
<feature type="compositionally biased region" description="Polar residues" evidence="2">
    <location>
        <begin position="323"/>
        <end position="336"/>
    </location>
</feature>
<feature type="compositionally biased region" description="Low complexity" evidence="2">
    <location>
        <begin position="343"/>
        <end position="352"/>
    </location>
</feature>
<feature type="compositionally biased region" description="Low complexity" evidence="2">
    <location>
        <begin position="372"/>
        <end position="383"/>
    </location>
</feature>
<feature type="compositionally biased region" description="Basic and acidic residues" evidence="2">
    <location>
        <begin position="391"/>
        <end position="416"/>
    </location>
</feature>
<feature type="compositionally biased region" description="Low complexity" evidence="2">
    <location>
        <begin position="422"/>
        <end position="433"/>
    </location>
</feature>
<feature type="compositionally biased region" description="Polar residues" evidence="2">
    <location>
        <begin position="434"/>
        <end position="444"/>
    </location>
</feature>
<feature type="compositionally biased region" description="Low complexity" evidence="2">
    <location>
        <begin position="459"/>
        <end position="481"/>
    </location>
</feature>
<feature type="modified residue" description="4-aspartylphosphate" evidence="1 9">
    <location>
        <position position="556"/>
    </location>
</feature>
<feature type="mutagenesis site" description="Impairs filamentation and decreases virulence." evidence="9 11">
    <original>D</original>
    <variation>K</variation>
    <location>
        <position position="513"/>
    </location>
</feature>
<feature type="mutagenesis site" description="Leads to sensitivity to H(2)O(2) and t-butyl hydroperoxide and decreases virulence." evidence="9 11">
    <original>D</original>
    <variation>N</variation>
    <location>
        <position position="556"/>
    </location>
</feature>
<organism>
    <name type="scientific">Candida albicans (strain SC5314 / ATCC MYA-2876)</name>
    <name type="common">Yeast</name>
    <dbReference type="NCBI Taxonomy" id="237561"/>
    <lineage>
        <taxon>Eukaryota</taxon>
        <taxon>Fungi</taxon>
        <taxon>Dikarya</taxon>
        <taxon>Ascomycota</taxon>
        <taxon>Saccharomycotina</taxon>
        <taxon>Pichiomycetes</taxon>
        <taxon>Debaryomycetaceae</taxon>
        <taxon>Candida/Lodderomyces clade</taxon>
        <taxon>Candida</taxon>
    </lineage>
</organism>
<sequence length="674" mass="73560">MNFLYNNSDYSSTSHTMKSPSAYNQFPKLQASNSTAGNNNTATTATAAAAAASASASASVTPQLISPTTLTTPQNKYKRGGLDNTLPKIETTRKNRPDDGNSITPSNSINSGTTKLTLPPRRVWVKKPQTNNPTTVLCYVNDIIDDLKVAVVNKYPNTIGRYEDAADLLVKIDLNNIRVPVSPSVNRVSQRTPFDNCIILEPDQNVWQILDNYFPNGMAMHDALIIETPTFKPDHQMLTPITANMNNNSNTFIPFQERQSSIGNNNNNNSNVNNNNKAQAVKHPQPMQPNNTRVGLHKSYAMNRSSFSTNNNPVPSIIKDRSVSPSNLGVSRNSPVSHKRSYSNPVSSPNSVATQANNPSAVLLLPRNFSLANNNSNQASQSSGGTPAKKVLSEDGSKSVNDKTEEVVSSKLKPNDNNKSYQAKQQEQQTAEQSENGFSETSASPEAVHNSKAAPLPLTKSSTTATTTSSNSISNNNNTSSKGKPSQSKLKAANDPTPTDIVLPSISVLVVEDNAINQAILGAFLRKRKIHYQIAKNGQEAIDKWKKGGFHLVLMDIQLPVKSGIEATKEIRHLEKLNRIGVFHENEIGKNVIINEEDRLTSNTFRSPVIIVALTASSNSSVDKTNALTAGCNDYLTKPVNLVWLQNKITEWGCMQALIDFDGWKDKNRRLNKA</sequence>
<proteinExistence type="evidence at protein level"/>
<accession>Q5AKU6</accession>
<accession>A0A1D8PFT0</accession>
<accession>G1UA00</accession>
<accession>Q9UVW6</accession>